<dbReference type="EMBL" id="CP000607">
    <property type="protein sequence ID" value="ABP37573.1"/>
    <property type="molecule type" value="Genomic_DNA"/>
</dbReference>
<dbReference type="SMR" id="A4SGG4"/>
<dbReference type="STRING" id="290318.Cvib_1563"/>
<dbReference type="KEGG" id="pvi:Cvib_1563"/>
<dbReference type="eggNOG" id="COG0779">
    <property type="taxonomic scope" value="Bacteria"/>
</dbReference>
<dbReference type="HOGENOM" id="CLU_070525_3_1_10"/>
<dbReference type="OrthoDB" id="9789702at2"/>
<dbReference type="GO" id="GO:0005737">
    <property type="term" value="C:cytoplasm"/>
    <property type="evidence" value="ECO:0007669"/>
    <property type="project" value="UniProtKB-SubCell"/>
</dbReference>
<dbReference type="GO" id="GO:0042274">
    <property type="term" value="P:ribosomal small subunit biogenesis"/>
    <property type="evidence" value="ECO:0007669"/>
    <property type="project" value="UniProtKB-UniRule"/>
</dbReference>
<dbReference type="Gene3D" id="3.30.300.70">
    <property type="entry name" value="RimP-like superfamily, N-terminal"/>
    <property type="match status" value="1"/>
</dbReference>
<dbReference type="HAMAP" id="MF_01077">
    <property type="entry name" value="RimP"/>
    <property type="match status" value="1"/>
</dbReference>
<dbReference type="InterPro" id="IPR003728">
    <property type="entry name" value="Ribosome_maturation_RimP"/>
</dbReference>
<dbReference type="InterPro" id="IPR028989">
    <property type="entry name" value="RimP_N"/>
</dbReference>
<dbReference type="InterPro" id="IPR035956">
    <property type="entry name" value="RimP_N_sf"/>
</dbReference>
<dbReference type="NCBIfam" id="NF011234">
    <property type="entry name" value="PRK14641.1"/>
    <property type="match status" value="1"/>
</dbReference>
<dbReference type="PANTHER" id="PTHR33867">
    <property type="entry name" value="RIBOSOME MATURATION FACTOR RIMP"/>
    <property type="match status" value="1"/>
</dbReference>
<dbReference type="PANTHER" id="PTHR33867:SF1">
    <property type="entry name" value="RIBOSOME MATURATION FACTOR RIMP"/>
    <property type="match status" value="1"/>
</dbReference>
<dbReference type="Pfam" id="PF02576">
    <property type="entry name" value="RimP_N"/>
    <property type="match status" value="1"/>
</dbReference>
<dbReference type="SUPFAM" id="SSF75420">
    <property type="entry name" value="YhbC-like, N-terminal domain"/>
    <property type="match status" value="1"/>
</dbReference>
<organism>
    <name type="scientific">Chlorobium phaeovibrioides (strain DSM 265 / 1930)</name>
    <name type="common">Prosthecochloris vibrioformis (strain DSM 265)</name>
    <dbReference type="NCBI Taxonomy" id="290318"/>
    <lineage>
        <taxon>Bacteria</taxon>
        <taxon>Pseudomonadati</taxon>
        <taxon>Chlorobiota</taxon>
        <taxon>Chlorobiia</taxon>
        <taxon>Chlorobiales</taxon>
        <taxon>Chlorobiaceae</taxon>
        <taxon>Chlorobium/Pelodictyon group</taxon>
        <taxon>Chlorobium</taxon>
    </lineage>
</organism>
<reference key="1">
    <citation type="submission" date="2007-03" db="EMBL/GenBank/DDBJ databases">
        <title>Complete sequence of Prosthecochloris vibrioformis DSM 265.</title>
        <authorList>
            <consortium name="US DOE Joint Genome Institute"/>
            <person name="Copeland A."/>
            <person name="Lucas S."/>
            <person name="Lapidus A."/>
            <person name="Barry K."/>
            <person name="Detter J.C."/>
            <person name="Glavina del Rio T."/>
            <person name="Hammon N."/>
            <person name="Israni S."/>
            <person name="Pitluck S."/>
            <person name="Schmutz J."/>
            <person name="Larimer F."/>
            <person name="Land M."/>
            <person name="Hauser L."/>
            <person name="Mikhailova N."/>
            <person name="Li T."/>
            <person name="Overmann J."/>
            <person name="Schuster S.C."/>
            <person name="Bryant D.A."/>
            <person name="Richardson P."/>
        </authorList>
    </citation>
    <scope>NUCLEOTIDE SEQUENCE [LARGE SCALE GENOMIC DNA]</scope>
    <source>
        <strain>DSM 265 / 1930</strain>
    </source>
</reference>
<accession>A4SGG4</accession>
<keyword id="KW-0963">Cytoplasm</keyword>
<keyword id="KW-0690">Ribosome biogenesis</keyword>
<name>RIMP_CHLPM</name>
<proteinExistence type="inferred from homology"/>
<comment type="function">
    <text evidence="1">Required for maturation of 30S ribosomal subunits.</text>
</comment>
<comment type="subcellular location">
    <subcellularLocation>
        <location evidence="1">Cytoplasm</location>
    </subcellularLocation>
</comment>
<comment type="similarity">
    <text evidence="1">Belongs to the RimP family.</text>
</comment>
<evidence type="ECO:0000255" key="1">
    <source>
        <dbReference type="HAMAP-Rule" id="MF_01077"/>
    </source>
</evidence>
<gene>
    <name evidence="1" type="primary">rimP</name>
    <name type="ordered locus">Cvib_1563</name>
</gene>
<sequence length="172" mass="18802">MQEALLKCVHEVLSATAGTKAEGVYFIGMTVKGSVVHRKIDVVVDADSGVRIDQCAFLSRRLRERLEEDEEMIGILGDNFDLVVGSPGLGEPIILDRQYGRHVGRLLRVSYSDLEGVEHELTGHLLEVSLAEGAGSIMLKPRVEKKKGKGEELENITLELGAVLRAVPEAEI</sequence>
<feature type="chain" id="PRO_0000384736" description="Ribosome maturation factor RimP">
    <location>
        <begin position="1"/>
        <end position="172"/>
    </location>
</feature>
<protein>
    <recommendedName>
        <fullName evidence="1">Ribosome maturation factor RimP</fullName>
    </recommendedName>
</protein>